<proteinExistence type="evidence at protein level"/>
<sequence>MEDQQEENMQQLLNLLPKDQRQIFEIFIQWLNGKSSGPIQLHQNALLTVLQASPYPALQLLQLLHERSKLHIGQIISTLLRQLLDGDVASPRSLCVLANFPASVLEASTLRQKLMTRLVVDSITSEHLMLTMLARSDGQLLDDLLHEQQLTMRAQCSEAAPTKLLVLWLALNEREHFVASVCQHLKDFKCFQDVTLRNNLLILRLANEFALGSQTLEELGCLEKLLAEFDVSAVPEKLQEVHGFFYADFQRLSTLLNFLRPREISKTLRVDALLRAPGVLPLIHENGIHFKHQELHRLIEDTYKWQQLTPALKCHHQEEVEILSYYTALCHVYDVVLDQGEQTTKTKLVQLSVQLRQLHQLGALCSLLEDIFLLVFLRWEQLEPNSQRKGEDGENDEEDDEQYVDDDVASPPRPTAVHSQRTRYGFICRSASLHALFTFLKAFVTKKIHSQDYKSAPEQQGRFQRLVDAISEALWKLGVLQKIEQSLLKSAPSISCLLEPDQLLQLVQLHSTAKKKASSDDESRERSNHASSLNRRKARRQRRAVSFSGGVAGKASADGGLAMEQLRARAQLLSGSGSRKNSSVTSPCERSIIPKMLSTPEQLAIMALALKNFNDVKKIIETFHLEHSQLNRELHFMEQQQLVKQKLSAIYANYQILEGQQANSGETTVEQIKGVAAKGFELSKIISVVDNFSQAHRLQQSPELKALIQRHNTSAQQGFLQQFEERNLNALIICDLIVNLGFNREITSNLLLVIRRQQQQKKGGDEASNTPGSSELGAMNLLQNLCECMRLLERSGQQAALNELLSLKSYPLRPAVLALQLQREAAFQTLYQKEPSEYSHGHELRSNANQFQQLRSRHNYYARFCTYVQQLARLLQLRDPNLEYHTTQLLRNDPYEVIGELIYECGITPLEIEASVAALHLNLVHVIALNICPQLSEEPTKRLPRVVAPQKQESIHNYISQHNQLLAHILLAIQLGSLPDGDADVDFSFLGHLVHLSEVNVLASVYDGNRVLAALNAYKLESARLDQLVTDQEQLLQILLLGMSGQTDSPNRHKSRIDQLIGDLIEKDPRNIHLVVHMGNLGQRAQLLKEHFTRIPSSQQAKELIERTLHHRSAAKSIPTALRSELEHTLSDITIYARVSALLKFESWPQAYDFGRQTPNVIFEQLLQRRRFGLCLEWSRVVYLAGSAGQQRVCLLTLLDALLELRDGEELDESLLGIVEMFPPNPLVNFLDTHKDKFRSLPLLQWVIDYLEGHARDPRLYRNYQLSLEFLRQMDTNERSPFWKLIRHPLLIVEQLVMNARFELLGKLLDAARSKLLKERPLGPCPYCFDKTGHVYDVQSSAGLGSGAGETPAKIRFQLGQTTSEAFILLNFNSYQQDHFVGQDCLDLLLRIYASKALDYHVANVRAASEPSSLGTDVHNSLDSLCGAFVMPKQAPNRQQWTRDEEASHCMCCRRAAFTMLMRRHHCRRCGRVVCYACSTHRIRIPELYDELEVRICNDCAACSTPAKDQGDGTSSERSAISGQVSKSSGRSDSCKWQLSGIITHDKLLREEFSYEHAPSVALSLSILRNHVEQRSCVDLLLFHCRKLEKLIVPNPEVDYGLVAKMINCLAFAAKVRGAPGELENIREHSEIIMAVVQQGCESLIPTGPLNNHNLRKLADALVEAEHWTLALEVHLKCGFATTGVMAAHGLACLRAGCYDAAREKFAHCMTRLSSEQLNSSICKNIFGVASTEAVLLPRKRPQRGPALLQEILQLIAAIPQVQTQPETLHRASLIRSSNTSLASLFTRRREPYVQPRPLQEPALNIMNALAGLKNLAKGQYGGQMPTSEESRRQERGFEESLHYVLTYGSHADILTFLMRREELRAALRYWQHQQLDADLFIHHIFYPQLANGGLNVLMDELQQLDDAQFTAWRLPLLQTCRHLEQQQQLSSLYQLQLLLKDPIRASMTCVKFYALQCENFQKLHANAQHLLSALRHLQGELDMAEWEHLQRQQARRNSVSSTASVRGACFAMQMDARALNGHINTIRRQLEVAKFLDKCEREQPPDEPLRTIQTLKQIRLESSRGTLPTLFEGAADRIQICILILMCGKNIDEGFGLAYGIMQDFKLAALKVFGATAKYLSRNQRLGEVERLLDCIGSNNGGDISTESDEILSIAINAAVHSSAPETKQMLDRLIKRIGSVELRVSSYIYIGQLKSAYLLANKHDRLADIRRILRQAELTGQVHIKKLCDMKLQLSAAPTPL</sequence>
<feature type="chain" id="PRO_0000408353" description="Zinc finger FYVE domain-containing protein 26 homolog">
    <location>
        <begin position="1"/>
        <end position="2243"/>
    </location>
</feature>
<feature type="repeat" description="LRR 1" evidence="2">
    <location>
        <begin position="617"/>
        <end position="644"/>
    </location>
</feature>
<feature type="repeat" description="LRR 2" evidence="2">
    <location>
        <begin position="1887"/>
        <end position="1912"/>
    </location>
</feature>
<feature type="zinc finger region" description="FYVE-type" evidence="3">
    <location>
        <begin position="1444"/>
        <end position="1500"/>
    </location>
</feature>
<feature type="region of interest" description="Disordered" evidence="4">
    <location>
        <begin position="386"/>
        <end position="416"/>
    </location>
</feature>
<feature type="region of interest" description="Disordered" evidence="4">
    <location>
        <begin position="514"/>
        <end position="556"/>
    </location>
</feature>
<feature type="region of interest" description="Disordered" evidence="4">
    <location>
        <begin position="1505"/>
        <end position="1534"/>
    </location>
</feature>
<feature type="compositionally biased region" description="Acidic residues" evidence="4">
    <location>
        <begin position="393"/>
        <end position="408"/>
    </location>
</feature>
<feature type="compositionally biased region" description="Basic and acidic residues" evidence="4">
    <location>
        <begin position="517"/>
        <end position="528"/>
    </location>
</feature>
<feature type="compositionally biased region" description="Basic residues" evidence="4">
    <location>
        <begin position="534"/>
        <end position="543"/>
    </location>
</feature>
<feature type="compositionally biased region" description="Polar residues" evidence="4">
    <location>
        <begin position="1512"/>
        <end position="1534"/>
    </location>
</feature>
<feature type="binding site" evidence="3">
    <location>
        <position position="1450"/>
    </location>
    <ligand>
        <name>Zn(2+)</name>
        <dbReference type="ChEBI" id="CHEBI:29105"/>
        <label>1</label>
    </ligand>
</feature>
<feature type="binding site" evidence="3">
    <location>
        <position position="1453"/>
    </location>
    <ligand>
        <name>Zn(2+)</name>
        <dbReference type="ChEBI" id="CHEBI:29105"/>
        <label>1</label>
    </ligand>
</feature>
<feature type="binding site" evidence="3">
    <location>
        <position position="1467"/>
    </location>
    <ligand>
        <name>Zn(2+)</name>
        <dbReference type="ChEBI" id="CHEBI:29105"/>
        <label>2</label>
    </ligand>
</feature>
<feature type="binding site" evidence="3">
    <location>
        <position position="1470"/>
    </location>
    <ligand>
        <name>Zn(2+)</name>
        <dbReference type="ChEBI" id="CHEBI:29105"/>
        <label>2</label>
    </ligand>
</feature>
<feature type="binding site" evidence="3">
    <location>
        <position position="1475"/>
    </location>
    <ligand>
        <name>Zn(2+)</name>
        <dbReference type="ChEBI" id="CHEBI:29105"/>
        <label>1</label>
    </ligand>
</feature>
<feature type="binding site" evidence="3">
    <location>
        <position position="1478"/>
    </location>
    <ligand>
        <name>Zn(2+)</name>
        <dbReference type="ChEBI" id="CHEBI:29105"/>
        <label>1</label>
    </ligand>
</feature>
<feature type="binding site" evidence="3">
    <location>
        <position position="1497"/>
    </location>
    <ligand>
        <name>Zn(2+)</name>
        <dbReference type="ChEBI" id="CHEBI:29105"/>
        <label>2</label>
    </ligand>
</feature>
<feature type="binding site" evidence="3">
    <location>
        <position position="1500"/>
    </location>
    <ligand>
        <name>Zn(2+)</name>
        <dbReference type="ChEBI" id="CHEBI:29105"/>
        <label>2</label>
    </ligand>
</feature>
<feature type="modified residue" description="Phosphotyrosine" evidence="5">
    <location>
        <position position="403"/>
    </location>
</feature>
<feature type="modified residue" description="Phosphoserine" evidence="5">
    <location>
        <position position="1424"/>
    </location>
</feature>
<feature type="sequence conflict" description="In Ref. 3; AAO39570." evidence="8" ref="3">
    <original>V</original>
    <variation>L</variation>
    <location>
        <position position="1561"/>
    </location>
</feature>
<protein>
    <recommendedName>
        <fullName evidence="8">Zinc finger FYVE domain-containing protein 26 homolog</fullName>
        <shortName evidence="8">ZFYVE26</shortName>
    </recommendedName>
    <alternativeName>
        <fullName evidence="7 9">Protein Spastizin</fullName>
    </alternativeName>
</protein>
<evidence type="ECO:0000250" key="1">
    <source>
        <dbReference type="UniProtKB" id="Q68DK2"/>
    </source>
</evidence>
<evidence type="ECO:0000255" key="2"/>
<evidence type="ECO:0000255" key="3">
    <source>
        <dbReference type="PROSITE-ProRule" id="PRU00091"/>
    </source>
</evidence>
<evidence type="ECO:0000256" key="4">
    <source>
        <dbReference type="SAM" id="MobiDB-lite"/>
    </source>
</evidence>
<evidence type="ECO:0000269" key="5">
    <source>
    </source>
</evidence>
<evidence type="ECO:0000269" key="6">
    <source>
    </source>
</evidence>
<evidence type="ECO:0000303" key="7">
    <source>
    </source>
</evidence>
<evidence type="ECO:0000305" key="8"/>
<evidence type="ECO:0000312" key="9">
    <source>
        <dbReference type="FlyBase" id="FBgn0037897"/>
    </source>
</evidence>
<evidence type="ECO:0000312" key="10">
    <source>
        <dbReference type="Proteomes" id="UP000000803"/>
    </source>
</evidence>
<organism evidence="10">
    <name type="scientific">Drosophila melanogaster</name>
    <name type="common">Fruit fly</name>
    <dbReference type="NCBI Taxonomy" id="7227"/>
    <lineage>
        <taxon>Eukaryota</taxon>
        <taxon>Metazoa</taxon>
        <taxon>Ecdysozoa</taxon>
        <taxon>Arthropoda</taxon>
        <taxon>Hexapoda</taxon>
        <taxon>Insecta</taxon>
        <taxon>Pterygota</taxon>
        <taxon>Neoptera</taxon>
        <taxon>Endopterygota</taxon>
        <taxon>Diptera</taxon>
        <taxon>Brachycera</taxon>
        <taxon>Muscomorpha</taxon>
        <taxon>Ephydroidea</taxon>
        <taxon>Drosophilidae</taxon>
        <taxon>Drosophila</taxon>
        <taxon>Sophophora</taxon>
    </lineage>
</organism>
<keyword id="KW-0433">Leucine-rich repeat</keyword>
<keyword id="KW-0479">Metal-binding</keyword>
<keyword id="KW-0597">Phosphoprotein</keyword>
<keyword id="KW-1185">Reference proteome</keyword>
<keyword id="KW-0677">Repeat</keyword>
<keyword id="KW-0862">Zinc</keyword>
<keyword id="KW-0863">Zinc-finger</keyword>
<accession>Q9VGP1</accession>
<accession>Q86NZ0</accession>
<accession>Q961I5</accession>
<name>ZFY26_DROME</name>
<gene>
    <name evidence="7 9" type="primary">Sptz</name>
    <name evidence="9" type="ORF">CG5270</name>
</gene>
<comment type="function">
    <text evidence="1 6">Phosphatidylinositol 3-phosphate (PtdIns[3]P)-binding protein (By similarity). Involved in autophagy (PubMed:36029068).</text>
</comment>
<comment type="disruption phenotype">
    <text evidence="6">RNAi-mediated knockdown results in autophagosome accumulation and defective autophagic lysosome reformation in larval muscle (PubMed:36029068). Adult flies are sensitive to starvation and have a reduced activity index (PubMed:36029068).</text>
</comment>
<comment type="similarity">
    <text evidence="8">Belongs to the ZFYVE26 family.</text>
</comment>
<comment type="sequence caution" evidence="8">
    <conflict type="erroneous initiation">
        <sequence resource="EMBL-CDS" id="AAK92994"/>
    </conflict>
    <text>Truncated N-terminus.</text>
</comment>
<dbReference type="EMBL" id="AE014297">
    <property type="protein sequence ID" value="AAF54635.3"/>
    <property type="molecule type" value="Genomic_DNA"/>
</dbReference>
<dbReference type="EMBL" id="BT003566">
    <property type="protein sequence ID" value="AAO39570.1"/>
    <property type="molecule type" value="mRNA"/>
</dbReference>
<dbReference type="EMBL" id="AY051570">
    <property type="protein sequence ID" value="AAK92994.1"/>
    <property type="status" value="ALT_INIT"/>
    <property type="molecule type" value="mRNA"/>
</dbReference>
<dbReference type="RefSeq" id="NP_731570.2">
    <property type="nucleotide sequence ID" value="NM_169389.3"/>
</dbReference>
<dbReference type="SMR" id="Q9VGP1"/>
<dbReference type="BioGRID" id="66503">
    <property type="interactions" value="4"/>
</dbReference>
<dbReference type="FunCoup" id="Q9VGP1">
    <property type="interactions" value="24"/>
</dbReference>
<dbReference type="IntAct" id="Q9VGP1">
    <property type="interactions" value="4"/>
</dbReference>
<dbReference type="STRING" id="7227.FBpp0081863"/>
<dbReference type="GlyGen" id="Q9VGP1">
    <property type="glycosylation" value="1 site"/>
</dbReference>
<dbReference type="iPTMnet" id="Q9VGP1"/>
<dbReference type="PaxDb" id="7227-FBpp0081863"/>
<dbReference type="EnsemblMetazoa" id="FBtr0082387">
    <property type="protein sequence ID" value="FBpp0081863"/>
    <property type="gene ID" value="FBgn0037897"/>
</dbReference>
<dbReference type="GeneID" id="41370"/>
<dbReference type="KEGG" id="dme:Dmel_CG5270"/>
<dbReference type="UCSC" id="CG5270-RA">
    <property type="organism name" value="d. melanogaster"/>
</dbReference>
<dbReference type="UCSC" id="CG5270-RB">
    <property type="organism name" value="d. melanogaster"/>
</dbReference>
<dbReference type="AGR" id="FB:FBgn0037897"/>
<dbReference type="CTD" id="41370"/>
<dbReference type="FlyBase" id="FBgn0037897">
    <property type="gene designation" value="Sptz"/>
</dbReference>
<dbReference type="VEuPathDB" id="VectorBase:FBgn0037897"/>
<dbReference type="eggNOG" id="KOG1811">
    <property type="taxonomic scope" value="Eukaryota"/>
</dbReference>
<dbReference type="HOGENOM" id="CLU_230725_0_0_1"/>
<dbReference type="InParanoid" id="Q9VGP1"/>
<dbReference type="OMA" id="SYYTALC"/>
<dbReference type="OrthoDB" id="1936617at2759"/>
<dbReference type="PhylomeDB" id="Q9VGP1"/>
<dbReference type="BioGRID-ORCS" id="41370">
    <property type="hits" value="0 hits in 1 CRISPR screen"/>
</dbReference>
<dbReference type="GenomeRNAi" id="41370"/>
<dbReference type="PRO" id="PR:Q9VGP1"/>
<dbReference type="Proteomes" id="UP000000803">
    <property type="component" value="Chromosome 3R"/>
</dbReference>
<dbReference type="Bgee" id="FBgn0037897">
    <property type="expression patterns" value="Expressed in dorsal appendage forming follicle cell in ovary and 76 other cell types or tissues"/>
</dbReference>
<dbReference type="ExpressionAtlas" id="Q9VGP1">
    <property type="expression patterns" value="baseline and differential"/>
</dbReference>
<dbReference type="GO" id="GO:0005813">
    <property type="term" value="C:centrosome"/>
    <property type="evidence" value="ECO:0000318"/>
    <property type="project" value="GO_Central"/>
</dbReference>
<dbReference type="GO" id="GO:0030496">
    <property type="term" value="C:midbody"/>
    <property type="evidence" value="ECO:0000318"/>
    <property type="project" value="GO_Central"/>
</dbReference>
<dbReference type="GO" id="GO:0032266">
    <property type="term" value="F:phosphatidylinositol-3-phosphate binding"/>
    <property type="evidence" value="ECO:0000318"/>
    <property type="project" value="GO_Central"/>
</dbReference>
<dbReference type="GO" id="GO:0008270">
    <property type="term" value="F:zinc ion binding"/>
    <property type="evidence" value="ECO:0007669"/>
    <property type="project" value="UniProtKB-KW"/>
</dbReference>
<dbReference type="GO" id="GO:0006914">
    <property type="term" value="P:autophagy"/>
    <property type="evidence" value="ECO:0000315"/>
    <property type="project" value="FlyBase"/>
</dbReference>
<dbReference type="GO" id="GO:0000724">
    <property type="term" value="P:double-strand break repair via homologous recombination"/>
    <property type="evidence" value="ECO:0007669"/>
    <property type="project" value="InterPro"/>
</dbReference>
<dbReference type="GO" id="GO:0000281">
    <property type="term" value="P:mitotic cytokinesis"/>
    <property type="evidence" value="ECO:0007669"/>
    <property type="project" value="InterPro"/>
</dbReference>
<dbReference type="GO" id="GO:0032465">
    <property type="term" value="P:regulation of cytokinesis"/>
    <property type="evidence" value="ECO:0000318"/>
    <property type="project" value="GO_Central"/>
</dbReference>
<dbReference type="FunFam" id="3.30.40.10:FF:000295">
    <property type="entry name" value="Zinc finger, FYVE domain-containing 26"/>
    <property type="match status" value="1"/>
</dbReference>
<dbReference type="Gene3D" id="3.30.40.10">
    <property type="entry name" value="Zinc/RING finger domain, C3HC4 (zinc finger)"/>
    <property type="match status" value="1"/>
</dbReference>
<dbReference type="InterPro" id="IPR028730">
    <property type="entry name" value="ZFYVE26"/>
</dbReference>
<dbReference type="InterPro" id="IPR000306">
    <property type="entry name" value="Znf_FYVE"/>
</dbReference>
<dbReference type="InterPro" id="IPR017455">
    <property type="entry name" value="Znf_FYVE-rel"/>
</dbReference>
<dbReference type="InterPro" id="IPR011011">
    <property type="entry name" value="Znf_FYVE_PHD"/>
</dbReference>
<dbReference type="InterPro" id="IPR013083">
    <property type="entry name" value="Znf_RING/FYVE/PHD"/>
</dbReference>
<dbReference type="PANTHER" id="PTHR46591">
    <property type="entry name" value="ZINC FINGER FYVE DOMAIN-CONTAINING PROTEIN 26"/>
    <property type="match status" value="1"/>
</dbReference>
<dbReference type="PANTHER" id="PTHR46591:SF1">
    <property type="entry name" value="ZINC FINGER FYVE DOMAIN-CONTAINING PROTEIN 26"/>
    <property type="match status" value="1"/>
</dbReference>
<dbReference type="Pfam" id="PF01363">
    <property type="entry name" value="FYVE"/>
    <property type="match status" value="1"/>
</dbReference>
<dbReference type="SMART" id="SM00064">
    <property type="entry name" value="FYVE"/>
    <property type="match status" value="1"/>
</dbReference>
<dbReference type="SUPFAM" id="SSF57903">
    <property type="entry name" value="FYVE/PHD zinc finger"/>
    <property type="match status" value="1"/>
</dbReference>
<dbReference type="PROSITE" id="PS50178">
    <property type="entry name" value="ZF_FYVE"/>
    <property type="match status" value="1"/>
</dbReference>
<reference key="1">
    <citation type="journal article" date="2000" name="Science">
        <title>The genome sequence of Drosophila melanogaster.</title>
        <authorList>
            <person name="Adams M.D."/>
            <person name="Celniker S.E."/>
            <person name="Holt R.A."/>
            <person name="Evans C.A."/>
            <person name="Gocayne J.D."/>
            <person name="Amanatides P.G."/>
            <person name="Scherer S.E."/>
            <person name="Li P.W."/>
            <person name="Hoskins R.A."/>
            <person name="Galle R.F."/>
            <person name="George R.A."/>
            <person name="Lewis S.E."/>
            <person name="Richards S."/>
            <person name="Ashburner M."/>
            <person name="Henderson S.N."/>
            <person name="Sutton G.G."/>
            <person name="Wortman J.R."/>
            <person name="Yandell M.D."/>
            <person name="Zhang Q."/>
            <person name="Chen L.X."/>
            <person name="Brandon R.C."/>
            <person name="Rogers Y.-H.C."/>
            <person name="Blazej R.G."/>
            <person name="Champe M."/>
            <person name="Pfeiffer B.D."/>
            <person name="Wan K.H."/>
            <person name="Doyle C."/>
            <person name="Baxter E.G."/>
            <person name="Helt G."/>
            <person name="Nelson C.R."/>
            <person name="Miklos G.L.G."/>
            <person name="Abril J.F."/>
            <person name="Agbayani A."/>
            <person name="An H.-J."/>
            <person name="Andrews-Pfannkoch C."/>
            <person name="Baldwin D."/>
            <person name="Ballew R.M."/>
            <person name="Basu A."/>
            <person name="Baxendale J."/>
            <person name="Bayraktaroglu L."/>
            <person name="Beasley E.M."/>
            <person name="Beeson K.Y."/>
            <person name="Benos P.V."/>
            <person name="Berman B.P."/>
            <person name="Bhandari D."/>
            <person name="Bolshakov S."/>
            <person name="Borkova D."/>
            <person name="Botchan M.R."/>
            <person name="Bouck J."/>
            <person name="Brokstein P."/>
            <person name="Brottier P."/>
            <person name="Burtis K.C."/>
            <person name="Busam D.A."/>
            <person name="Butler H."/>
            <person name="Cadieu E."/>
            <person name="Center A."/>
            <person name="Chandra I."/>
            <person name="Cherry J.M."/>
            <person name="Cawley S."/>
            <person name="Dahlke C."/>
            <person name="Davenport L.B."/>
            <person name="Davies P."/>
            <person name="de Pablos B."/>
            <person name="Delcher A."/>
            <person name="Deng Z."/>
            <person name="Mays A.D."/>
            <person name="Dew I."/>
            <person name="Dietz S.M."/>
            <person name="Dodson K."/>
            <person name="Doup L.E."/>
            <person name="Downes M."/>
            <person name="Dugan-Rocha S."/>
            <person name="Dunkov B.C."/>
            <person name="Dunn P."/>
            <person name="Durbin K.J."/>
            <person name="Evangelista C.C."/>
            <person name="Ferraz C."/>
            <person name="Ferriera S."/>
            <person name="Fleischmann W."/>
            <person name="Fosler C."/>
            <person name="Gabrielian A.E."/>
            <person name="Garg N.S."/>
            <person name="Gelbart W.M."/>
            <person name="Glasser K."/>
            <person name="Glodek A."/>
            <person name="Gong F."/>
            <person name="Gorrell J.H."/>
            <person name="Gu Z."/>
            <person name="Guan P."/>
            <person name="Harris M."/>
            <person name="Harris N.L."/>
            <person name="Harvey D.A."/>
            <person name="Heiman T.J."/>
            <person name="Hernandez J.R."/>
            <person name="Houck J."/>
            <person name="Hostin D."/>
            <person name="Houston K.A."/>
            <person name="Howland T.J."/>
            <person name="Wei M.-H."/>
            <person name="Ibegwam C."/>
            <person name="Jalali M."/>
            <person name="Kalush F."/>
            <person name="Karpen G.H."/>
            <person name="Ke Z."/>
            <person name="Kennison J.A."/>
            <person name="Ketchum K.A."/>
            <person name="Kimmel B.E."/>
            <person name="Kodira C.D."/>
            <person name="Kraft C.L."/>
            <person name="Kravitz S."/>
            <person name="Kulp D."/>
            <person name="Lai Z."/>
            <person name="Lasko P."/>
            <person name="Lei Y."/>
            <person name="Levitsky A.A."/>
            <person name="Li J.H."/>
            <person name="Li Z."/>
            <person name="Liang Y."/>
            <person name="Lin X."/>
            <person name="Liu X."/>
            <person name="Mattei B."/>
            <person name="McIntosh T.C."/>
            <person name="McLeod M.P."/>
            <person name="McPherson D."/>
            <person name="Merkulov G."/>
            <person name="Milshina N.V."/>
            <person name="Mobarry C."/>
            <person name="Morris J."/>
            <person name="Moshrefi A."/>
            <person name="Mount S.M."/>
            <person name="Moy M."/>
            <person name="Murphy B."/>
            <person name="Murphy L."/>
            <person name="Muzny D.M."/>
            <person name="Nelson D.L."/>
            <person name="Nelson D.R."/>
            <person name="Nelson K.A."/>
            <person name="Nixon K."/>
            <person name="Nusskern D.R."/>
            <person name="Pacleb J.M."/>
            <person name="Palazzolo M."/>
            <person name="Pittman G.S."/>
            <person name="Pan S."/>
            <person name="Pollard J."/>
            <person name="Puri V."/>
            <person name="Reese M.G."/>
            <person name="Reinert K."/>
            <person name="Remington K."/>
            <person name="Saunders R.D.C."/>
            <person name="Scheeler F."/>
            <person name="Shen H."/>
            <person name="Shue B.C."/>
            <person name="Siden-Kiamos I."/>
            <person name="Simpson M."/>
            <person name="Skupski M.P."/>
            <person name="Smith T.J."/>
            <person name="Spier E."/>
            <person name="Spradling A.C."/>
            <person name="Stapleton M."/>
            <person name="Strong R."/>
            <person name="Sun E."/>
            <person name="Svirskas R."/>
            <person name="Tector C."/>
            <person name="Turner R."/>
            <person name="Venter E."/>
            <person name="Wang A.H."/>
            <person name="Wang X."/>
            <person name="Wang Z.-Y."/>
            <person name="Wassarman D.A."/>
            <person name="Weinstock G.M."/>
            <person name="Weissenbach J."/>
            <person name="Williams S.M."/>
            <person name="Woodage T."/>
            <person name="Worley K.C."/>
            <person name="Wu D."/>
            <person name="Yang S."/>
            <person name="Yao Q.A."/>
            <person name="Ye J."/>
            <person name="Yeh R.-F."/>
            <person name="Zaveri J.S."/>
            <person name="Zhan M."/>
            <person name="Zhang G."/>
            <person name="Zhao Q."/>
            <person name="Zheng L."/>
            <person name="Zheng X.H."/>
            <person name="Zhong F.N."/>
            <person name="Zhong W."/>
            <person name="Zhou X."/>
            <person name="Zhu S.C."/>
            <person name="Zhu X."/>
            <person name="Smith H.O."/>
            <person name="Gibbs R.A."/>
            <person name="Myers E.W."/>
            <person name="Rubin G.M."/>
            <person name="Venter J.C."/>
        </authorList>
    </citation>
    <scope>NUCLEOTIDE SEQUENCE [LARGE SCALE GENOMIC DNA]</scope>
    <source>
        <strain>Berkeley</strain>
    </source>
</reference>
<reference key="2">
    <citation type="journal article" date="2002" name="Genome Biol.">
        <title>Annotation of the Drosophila melanogaster euchromatic genome: a systematic review.</title>
        <authorList>
            <person name="Misra S."/>
            <person name="Crosby M.A."/>
            <person name="Mungall C.J."/>
            <person name="Matthews B.B."/>
            <person name="Campbell K.S."/>
            <person name="Hradecky P."/>
            <person name="Huang Y."/>
            <person name="Kaminker J.S."/>
            <person name="Millburn G.H."/>
            <person name="Prochnik S.E."/>
            <person name="Smith C.D."/>
            <person name="Tupy J.L."/>
            <person name="Whitfield E.J."/>
            <person name="Bayraktaroglu L."/>
            <person name="Berman B.P."/>
            <person name="Bettencourt B.R."/>
            <person name="Celniker S.E."/>
            <person name="de Grey A.D.N.J."/>
            <person name="Drysdale R.A."/>
            <person name="Harris N.L."/>
            <person name="Richter J."/>
            <person name="Russo S."/>
            <person name="Schroeder A.J."/>
            <person name="Shu S.Q."/>
            <person name="Stapleton M."/>
            <person name="Yamada C."/>
            <person name="Ashburner M."/>
            <person name="Gelbart W.M."/>
            <person name="Rubin G.M."/>
            <person name="Lewis S.E."/>
        </authorList>
    </citation>
    <scope>GENOME REANNOTATION</scope>
    <source>
        <strain>Berkeley</strain>
    </source>
</reference>
<reference key="3">
    <citation type="submission" date="2003-02" db="EMBL/GenBank/DDBJ databases">
        <authorList>
            <person name="Stapleton M."/>
            <person name="Brokstein P."/>
            <person name="Hong L."/>
            <person name="Agbayani A."/>
            <person name="Carlson J."/>
            <person name="Champe M."/>
            <person name="Chavez C."/>
            <person name="Dorsett V."/>
            <person name="Dresnek D."/>
            <person name="Farfan D."/>
            <person name="Frise E."/>
            <person name="George R."/>
            <person name="Gonzalez M."/>
            <person name="Guarin H."/>
            <person name="Kronmiller B."/>
            <person name="Li P."/>
            <person name="Liao G."/>
            <person name="Miranda A."/>
            <person name="Mungall C.J."/>
            <person name="Nunoo J."/>
            <person name="Pacleb J."/>
            <person name="Paragas V."/>
            <person name="Park S."/>
            <person name="Patel S."/>
            <person name="Phouanenavong S."/>
            <person name="Wan K."/>
            <person name="Yu C."/>
            <person name="Lewis S.E."/>
            <person name="Rubin G.M."/>
            <person name="Celniker S."/>
        </authorList>
    </citation>
    <scope>NUCLEOTIDE SEQUENCE [LARGE SCALE MRNA] OF 781-2243</scope>
    <source>
        <strain>Berkeley</strain>
        <tissue>Larva</tissue>
        <tissue>Pupae</tissue>
    </source>
</reference>
<reference key="4">
    <citation type="journal article" date="2002" name="Genome Biol.">
        <title>A Drosophila full-length cDNA resource.</title>
        <authorList>
            <person name="Stapleton M."/>
            <person name="Carlson J.W."/>
            <person name="Brokstein P."/>
            <person name="Yu C."/>
            <person name="Champe M."/>
            <person name="George R.A."/>
            <person name="Guarin H."/>
            <person name="Kronmiller B."/>
            <person name="Pacleb J.M."/>
            <person name="Park S."/>
            <person name="Wan K.H."/>
            <person name="Rubin G.M."/>
            <person name="Celniker S.E."/>
        </authorList>
    </citation>
    <scope>NUCLEOTIDE SEQUENCE [LARGE SCALE MRNA] OF 1263-2243</scope>
    <source>
        <strain>Berkeley</strain>
        <tissue>Head</tissue>
    </source>
</reference>
<reference key="5">
    <citation type="journal article" date="2008" name="J. Proteome Res.">
        <title>Phosphoproteome analysis of Drosophila melanogaster embryos.</title>
        <authorList>
            <person name="Zhai B."/>
            <person name="Villen J."/>
            <person name="Beausoleil S.A."/>
            <person name="Mintseris J."/>
            <person name="Gygi S.P."/>
        </authorList>
    </citation>
    <scope>PHOSPHORYLATION [LARGE SCALE ANALYSIS] AT TYR-403 AND SER-1424</scope>
    <scope>IDENTIFICATION BY MASS SPECTROMETRY</scope>
    <source>
        <tissue>Embryo</tissue>
    </source>
</reference>
<reference key="6">
    <citation type="journal article" date="2023" name="Brain">
        <title>Rescue of lysosomal function as therapeutic strategy for SPG15 hereditary spastic paraplegia.</title>
        <authorList>
            <person name="Vantaggiato C."/>
            <person name="Orso G."/>
            <person name="Guarato G."/>
            <person name="Brivio F."/>
            <person name="Napoli B."/>
            <person name="Panzeri E."/>
            <person name="Masotti S."/>
            <person name="Santorelli F.M."/>
            <person name="Lamprou M."/>
            <person name="Gumeni S."/>
            <person name="Clementi E."/>
            <person name="Bassi M.T."/>
        </authorList>
    </citation>
    <scope>FUNCTION</scope>
    <scope>DISRUPTION PHENOTYPE</scope>
    <scope>NOMENCLATURE</scope>
</reference>